<name>PEPE_SALTI</name>
<proteinExistence type="inferred from homology"/>
<keyword id="KW-0963">Cytoplasm</keyword>
<keyword id="KW-0224">Dipeptidase</keyword>
<keyword id="KW-0378">Hydrolase</keyword>
<keyword id="KW-0645">Protease</keyword>
<keyword id="KW-0720">Serine protease</keyword>
<accession>P58494</accession>
<feature type="chain" id="PRO_0000209960" description="Peptidase E">
    <location>
        <begin position="1"/>
        <end position="229"/>
    </location>
</feature>
<feature type="active site" description="Charge relay system" evidence="1">
    <location>
        <position position="120"/>
    </location>
</feature>
<feature type="active site" description="Charge relay system" evidence="1">
    <location>
        <position position="135"/>
    </location>
</feature>
<feature type="active site" description="Charge relay system" evidence="1">
    <location>
        <position position="157"/>
    </location>
</feature>
<dbReference type="EC" id="3.4.13.21" evidence="1"/>
<dbReference type="EMBL" id="AL513382">
    <property type="protein sequence ID" value="CAD09195.1"/>
    <property type="molecule type" value="Genomic_DNA"/>
</dbReference>
<dbReference type="EMBL" id="AE014613">
    <property type="protein sequence ID" value="AAO71581.1"/>
    <property type="molecule type" value="Genomic_DNA"/>
</dbReference>
<dbReference type="RefSeq" id="NP_458509.1">
    <property type="nucleotide sequence ID" value="NC_003198.1"/>
</dbReference>
<dbReference type="RefSeq" id="WP_000421788.1">
    <property type="nucleotide sequence ID" value="NZ_WSUR01000027.1"/>
</dbReference>
<dbReference type="SMR" id="P58494"/>
<dbReference type="STRING" id="220341.gene:17588239"/>
<dbReference type="MEROPS" id="S51.001"/>
<dbReference type="KEGG" id="stt:t4117"/>
<dbReference type="KEGG" id="sty:STY4407"/>
<dbReference type="PATRIC" id="fig|220341.7.peg.4507"/>
<dbReference type="eggNOG" id="COG3340">
    <property type="taxonomic scope" value="Bacteria"/>
</dbReference>
<dbReference type="HOGENOM" id="CLU_071689_0_0_6"/>
<dbReference type="OMA" id="PWGYAVE"/>
<dbReference type="OrthoDB" id="3373764at2"/>
<dbReference type="Proteomes" id="UP000000541">
    <property type="component" value="Chromosome"/>
</dbReference>
<dbReference type="Proteomes" id="UP000002670">
    <property type="component" value="Chromosome"/>
</dbReference>
<dbReference type="GO" id="GO:0005737">
    <property type="term" value="C:cytoplasm"/>
    <property type="evidence" value="ECO:0007669"/>
    <property type="project" value="UniProtKB-SubCell"/>
</dbReference>
<dbReference type="GO" id="GO:0016805">
    <property type="term" value="F:dipeptidase activity"/>
    <property type="evidence" value="ECO:0007669"/>
    <property type="project" value="UniProtKB-UniRule"/>
</dbReference>
<dbReference type="GO" id="GO:0008236">
    <property type="term" value="F:serine-type peptidase activity"/>
    <property type="evidence" value="ECO:0007669"/>
    <property type="project" value="UniProtKB-KW"/>
</dbReference>
<dbReference type="GO" id="GO:0006508">
    <property type="term" value="P:proteolysis"/>
    <property type="evidence" value="ECO:0007669"/>
    <property type="project" value="UniProtKB-UniRule"/>
</dbReference>
<dbReference type="CDD" id="cd03146">
    <property type="entry name" value="GAT1_Peptidase_E"/>
    <property type="match status" value="1"/>
</dbReference>
<dbReference type="FunFam" id="3.40.50.880:FF:000007">
    <property type="entry name" value="Peptidase E"/>
    <property type="match status" value="1"/>
</dbReference>
<dbReference type="Gene3D" id="3.40.50.880">
    <property type="match status" value="1"/>
</dbReference>
<dbReference type="HAMAP" id="MF_00510">
    <property type="entry name" value="Peptidase_E"/>
    <property type="match status" value="1"/>
</dbReference>
<dbReference type="InterPro" id="IPR029062">
    <property type="entry name" value="Class_I_gatase-like"/>
</dbReference>
<dbReference type="InterPro" id="IPR005320">
    <property type="entry name" value="Peptidase_S51"/>
</dbReference>
<dbReference type="InterPro" id="IPR023172">
    <property type="entry name" value="Peptidase_S51_dipeptidase-E"/>
</dbReference>
<dbReference type="NCBIfam" id="NF003642">
    <property type="entry name" value="PRK05282.1"/>
    <property type="match status" value="1"/>
</dbReference>
<dbReference type="PANTHER" id="PTHR20842:SF0">
    <property type="entry name" value="ALPHA-ASPARTYL DIPEPTIDASE"/>
    <property type="match status" value="1"/>
</dbReference>
<dbReference type="PANTHER" id="PTHR20842">
    <property type="entry name" value="PROTEASE S51 ALPHA-ASPARTYL DIPEPTIDASE"/>
    <property type="match status" value="1"/>
</dbReference>
<dbReference type="Pfam" id="PF03575">
    <property type="entry name" value="Peptidase_S51"/>
    <property type="match status" value="1"/>
</dbReference>
<dbReference type="SUPFAM" id="SSF52317">
    <property type="entry name" value="Class I glutamine amidotransferase-like"/>
    <property type="match status" value="1"/>
</dbReference>
<comment type="function">
    <text evidence="1">Hydrolyzes dipeptides containing N-terminal aspartate residues. May play a role in allowing the cell to use peptide aspartate to spare carbon otherwise required for the synthesis of the aspartate family of amino acids.</text>
</comment>
<comment type="catalytic activity">
    <reaction evidence="1">
        <text>Dipeptidase E catalyzes the hydrolysis of dipeptides Asp-|-Xaa. It does not act on peptides with N-terminal Glu, Asn or Gln, nor does it cleave isoaspartyl peptides.</text>
        <dbReference type="EC" id="3.4.13.21"/>
    </reaction>
</comment>
<comment type="subcellular location">
    <subcellularLocation>
        <location evidence="1">Cytoplasm</location>
    </subcellularLocation>
</comment>
<comment type="similarity">
    <text evidence="1">Belongs to the peptidase S51 family.</text>
</comment>
<reference key="1">
    <citation type="journal article" date="2001" name="Nature">
        <title>Complete genome sequence of a multiple drug resistant Salmonella enterica serovar Typhi CT18.</title>
        <authorList>
            <person name="Parkhill J."/>
            <person name="Dougan G."/>
            <person name="James K.D."/>
            <person name="Thomson N.R."/>
            <person name="Pickard D."/>
            <person name="Wain J."/>
            <person name="Churcher C.M."/>
            <person name="Mungall K.L."/>
            <person name="Bentley S.D."/>
            <person name="Holden M.T.G."/>
            <person name="Sebaihia M."/>
            <person name="Baker S."/>
            <person name="Basham D."/>
            <person name="Brooks K."/>
            <person name="Chillingworth T."/>
            <person name="Connerton P."/>
            <person name="Cronin A."/>
            <person name="Davis P."/>
            <person name="Davies R.M."/>
            <person name="Dowd L."/>
            <person name="White N."/>
            <person name="Farrar J."/>
            <person name="Feltwell T."/>
            <person name="Hamlin N."/>
            <person name="Haque A."/>
            <person name="Hien T.T."/>
            <person name="Holroyd S."/>
            <person name="Jagels K."/>
            <person name="Krogh A."/>
            <person name="Larsen T.S."/>
            <person name="Leather S."/>
            <person name="Moule S."/>
            <person name="O'Gaora P."/>
            <person name="Parry C."/>
            <person name="Quail M.A."/>
            <person name="Rutherford K.M."/>
            <person name="Simmonds M."/>
            <person name="Skelton J."/>
            <person name="Stevens K."/>
            <person name="Whitehead S."/>
            <person name="Barrell B.G."/>
        </authorList>
    </citation>
    <scope>NUCLEOTIDE SEQUENCE [LARGE SCALE GENOMIC DNA]</scope>
    <source>
        <strain>CT18</strain>
    </source>
</reference>
<reference key="2">
    <citation type="journal article" date="2003" name="J. Bacteriol.">
        <title>Comparative genomics of Salmonella enterica serovar Typhi strains Ty2 and CT18.</title>
        <authorList>
            <person name="Deng W."/>
            <person name="Liou S.-R."/>
            <person name="Plunkett G. III"/>
            <person name="Mayhew G.F."/>
            <person name="Rose D.J."/>
            <person name="Burland V."/>
            <person name="Kodoyianni V."/>
            <person name="Schwartz D.C."/>
            <person name="Blattner F.R."/>
        </authorList>
    </citation>
    <scope>NUCLEOTIDE SEQUENCE [LARGE SCALE GENOMIC DNA]</scope>
    <source>
        <strain>ATCC 700931 / Ty2</strain>
    </source>
</reference>
<organism>
    <name type="scientific">Salmonella typhi</name>
    <dbReference type="NCBI Taxonomy" id="90370"/>
    <lineage>
        <taxon>Bacteria</taxon>
        <taxon>Pseudomonadati</taxon>
        <taxon>Pseudomonadota</taxon>
        <taxon>Gammaproteobacteria</taxon>
        <taxon>Enterobacterales</taxon>
        <taxon>Enterobacteriaceae</taxon>
        <taxon>Salmonella</taxon>
    </lineage>
</organism>
<sequence>MELLLLSNSTLPGKAWLEHALPLIANQLNGRRSAVFIPFAGVTQTWDEYTDKTAEVLAPLGINVTGIHRVADPLAAIEKAEIVIVGGGNTFQLLKESRERGLLAPVADRVKRGALYIGWSAGANLACPTIRTTNDMPIVDPNGFDALDLFPLQINPHFTNALPEGHKGETREQHIRELLVVAPELTVIGLPEGNWIQVSNGQAVLGGPNTTWVFKAGEEAVALEAGHRF</sequence>
<evidence type="ECO:0000255" key="1">
    <source>
        <dbReference type="HAMAP-Rule" id="MF_00510"/>
    </source>
</evidence>
<protein>
    <recommendedName>
        <fullName evidence="1">Peptidase E</fullName>
        <ecNumber evidence="1">3.4.13.21</ecNumber>
    </recommendedName>
    <alternativeName>
        <fullName evidence="1">Alpha-aspartyl dipeptidase</fullName>
    </alternativeName>
    <alternativeName>
        <fullName evidence="1">Asp-specific dipeptidase</fullName>
    </alternativeName>
    <alternativeName>
        <fullName evidence="1">Dipeptidase E</fullName>
    </alternativeName>
</protein>
<gene>
    <name evidence="1" type="primary">pepE</name>
    <name type="ordered locus">STY4407</name>
    <name type="ordered locus">t4117</name>
</gene>